<proteinExistence type="inferred from homology"/>
<accession>Q21N29</accession>
<name>METE_SACD2</name>
<feature type="chain" id="PRO_1000017269" description="5-methyltetrahydropteroyltriglutamate--homocysteine methyltransferase">
    <location>
        <begin position="1"/>
        <end position="765"/>
    </location>
</feature>
<feature type="active site" description="Proton donor" evidence="1">
    <location>
        <position position="704"/>
    </location>
</feature>
<feature type="binding site" evidence="1">
    <location>
        <begin position="16"/>
        <end position="19"/>
    </location>
    <ligand>
        <name>5-methyltetrahydropteroyltri-L-glutamate</name>
        <dbReference type="ChEBI" id="CHEBI:58207"/>
    </ligand>
</feature>
<feature type="binding site" evidence="1">
    <location>
        <position position="121"/>
    </location>
    <ligand>
        <name>5-methyltetrahydropteroyltri-L-glutamate</name>
        <dbReference type="ChEBI" id="CHEBI:58207"/>
    </ligand>
</feature>
<feature type="binding site" evidence="1">
    <location>
        <begin position="441"/>
        <end position="443"/>
    </location>
    <ligand>
        <name>L-homocysteine</name>
        <dbReference type="ChEBI" id="CHEBI:58199"/>
    </ligand>
</feature>
<feature type="binding site" evidence="1">
    <location>
        <begin position="441"/>
        <end position="443"/>
    </location>
    <ligand>
        <name>L-methionine</name>
        <dbReference type="ChEBI" id="CHEBI:57844"/>
    </ligand>
</feature>
<feature type="binding site" evidence="1">
    <location>
        <position position="494"/>
    </location>
    <ligand>
        <name>L-homocysteine</name>
        <dbReference type="ChEBI" id="CHEBI:58199"/>
    </ligand>
</feature>
<feature type="binding site" evidence="1">
    <location>
        <position position="494"/>
    </location>
    <ligand>
        <name>L-methionine</name>
        <dbReference type="ChEBI" id="CHEBI:57844"/>
    </ligand>
</feature>
<feature type="binding site" evidence="1">
    <location>
        <begin position="525"/>
        <end position="526"/>
    </location>
    <ligand>
        <name>5-methyltetrahydropteroyltri-L-glutamate</name>
        <dbReference type="ChEBI" id="CHEBI:58207"/>
    </ligand>
</feature>
<feature type="binding site" evidence="1">
    <location>
        <position position="571"/>
    </location>
    <ligand>
        <name>5-methyltetrahydropteroyltri-L-glutamate</name>
        <dbReference type="ChEBI" id="CHEBI:58207"/>
    </ligand>
</feature>
<feature type="binding site" evidence="1">
    <location>
        <position position="609"/>
    </location>
    <ligand>
        <name>L-homocysteine</name>
        <dbReference type="ChEBI" id="CHEBI:58199"/>
    </ligand>
</feature>
<feature type="binding site" evidence="1">
    <location>
        <position position="609"/>
    </location>
    <ligand>
        <name>L-methionine</name>
        <dbReference type="ChEBI" id="CHEBI:57844"/>
    </ligand>
</feature>
<feature type="binding site" evidence="1">
    <location>
        <position position="615"/>
    </location>
    <ligand>
        <name>5-methyltetrahydropteroyltri-L-glutamate</name>
        <dbReference type="ChEBI" id="CHEBI:58207"/>
    </ligand>
</feature>
<feature type="binding site" evidence="1">
    <location>
        <position position="651"/>
    </location>
    <ligand>
        <name>Zn(2+)</name>
        <dbReference type="ChEBI" id="CHEBI:29105"/>
        <note>catalytic</note>
    </ligand>
</feature>
<feature type="binding site" evidence="1">
    <location>
        <position position="653"/>
    </location>
    <ligand>
        <name>Zn(2+)</name>
        <dbReference type="ChEBI" id="CHEBI:29105"/>
        <note>catalytic</note>
    </ligand>
</feature>
<feature type="binding site" evidence="1">
    <location>
        <position position="675"/>
    </location>
    <ligand>
        <name>Zn(2+)</name>
        <dbReference type="ChEBI" id="CHEBI:29105"/>
        <note>catalytic</note>
    </ligand>
</feature>
<feature type="binding site" evidence="1">
    <location>
        <position position="736"/>
    </location>
    <ligand>
        <name>Zn(2+)</name>
        <dbReference type="ChEBI" id="CHEBI:29105"/>
        <note>catalytic</note>
    </ligand>
</feature>
<gene>
    <name evidence="1" type="primary">metE</name>
    <name type="ordered locus">Sde_0638</name>
</gene>
<keyword id="KW-0028">Amino-acid biosynthesis</keyword>
<keyword id="KW-0479">Metal-binding</keyword>
<keyword id="KW-0486">Methionine biosynthesis</keyword>
<keyword id="KW-0489">Methyltransferase</keyword>
<keyword id="KW-1185">Reference proteome</keyword>
<keyword id="KW-0677">Repeat</keyword>
<keyword id="KW-0808">Transferase</keyword>
<keyword id="KW-0862">Zinc</keyword>
<dbReference type="EC" id="2.1.1.14" evidence="1"/>
<dbReference type="EMBL" id="CP000282">
    <property type="protein sequence ID" value="ABD79900.1"/>
    <property type="molecule type" value="Genomic_DNA"/>
</dbReference>
<dbReference type="RefSeq" id="WP_011467121.1">
    <property type="nucleotide sequence ID" value="NC_007912.1"/>
</dbReference>
<dbReference type="SMR" id="Q21N29"/>
<dbReference type="STRING" id="203122.Sde_0638"/>
<dbReference type="GeneID" id="98612329"/>
<dbReference type="KEGG" id="sde:Sde_0638"/>
<dbReference type="eggNOG" id="COG0620">
    <property type="taxonomic scope" value="Bacteria"/>
</dbReference>
<dbReference type="HOGENOM" id="CLU_013175_0_0_6"/>
<dbReference type="OrthoDB" id="244285at2"/>
<dbReference type="UniPathway" id="UPA00051">
    <property type="reaction ID" value="UER00082"/>
</dbReference>
<dbReference type="Proteomes" id="UP000001947">
    <property type="component" value="Chromosome"/>
</dbReference>
<dbReference type="GO" id="GO:0003871">
    <property type="term" value="F:5-methyltetrahydropteroyltriglutamate-homocysteine S-methyltransferase activity"/>
    <property type="evidence" value="ECO:0007669"/>
    <property type="project" value="UniProtKB-UniRule"/>
</dbReference>
<dbReference type="GO" id="GO:0008270">
    <property type="term" value="F:zinc ion binding"/>
    <property type="evidence" value="ECO:0007669"/>
    <property type="project" value="InterPro"/>
</dbReference>
<dbReference type="GO" id="GO:0009086">
    <property type="term" value="P:methionine biosynthetic process"/>
    <property type="evidence" value="ECO:0007669"/>
    <property type="project" value="UniProtKB-UniRule"/>
</dbReference>
<dbReference type="GO" id="GO:0032259">
    <property type="term" value="P:methylation"/>
    <property type="evidence" value="ECO:0007669"/>
    <property type="project" value="UniProtKB-KW"/>
</dbReference>
<dbReference type="CDD" id="cd03311">
    <property type="entry name" value="CIMS_C_terminal_like"/>
    <property type="match status" value="1"/>
</dbReference>
<dbReference type="CDD" id="cd03312">
    <property type="entry name" value="CIMS_N_terminal_like"/>
    <property type="match status" value="1"/>
</dbReference>
<dbReference type="FunFam" id="3.20.20.210:FF:000002">
    <property type="entry name" value="5-methyltetrahydropteroyltriglutamate--homocysteine methyltransferase"/>
    <property type="match status" value="1"/>
</dbReference>
<dbReference type="Gene3D" id="3.20.20.210">
    <property type="match status" value="2"/>
</dbReference>
<dbReference type="HAMAP" id="MF_00172">
    <property type="entry name" value="Meth_synth"/>
    <property type="match status" value="1"/>
</dbReference>
<dbReference type="InterPro" id="IPR013215">
    <property type="entry name" value="Cbl-indep_Met_Synth_N"/>
</dbReference>
<dbReference type="InterPro" id="IPR006276">
    <property type="entry name" value="Cobalamin-indep_Met_synthase"/>
</dbReference>
<dbReference type="InterPro" id="IPR002629">
    <property type="entry name" value="Met_Synth_C/arc"/>
</dbReference>
<dbReference type="InterPro" id="IPR038071">
    <property type="entry name" value="UROD/MetE-like_sf"/>
</dbReference>
<dbReference type="NCBIfam" id="TIGR01371">
    <property type="entry name" value="met_syn_B12ind"/>
    <property type="match status" value="1"/>
</dbReference>
<dbReference type="NCBIfam" id="NF003556">
    <property type="entry name" value="PRK05222.1"/>
    <property type="match status" value="1"/>
</dbReference>
<dbReference type="PANTHER" id="PTHR30519">
    <property type="entry name" value="5-METHYLTETRAHYDROPTEROYLTRIGLUTAMATE--HOMOCYSTEINE METHYLTRANSFERASE"/>
    <property type="match status" value="1"/>
</dbReference>
<dbReference type="Pfam" id="PF08267">
    <property type="entry name" value="Meth_synt_1"/>
    <property type="match status" value="1"/>
</dbReference>
<dbReference type="Pfam" id="PF01717">
    <property type="entry name" value="Meth_synt_2"/>
    <property type="match status" value="1"/>
</dbReference>
<dbReference type="PIRSF" id="PIRSF000382">
    <property type="entry name" value="MeTrfase_B12_ind"/>
    <property type="match status" value="1"/>
</dbReference>
<dbReference type="SUPFAM" id="SSF51726">
    <property type="entry name" value="UROD/MetE-like"/>
    <property type="match status" value="2"/>
</dbReference>
<sequence>MTTVHNLGFPRIGAKRELKFACEAYWRGEIDQTQLDKTAHTLRANHWQTQLDAGVEWLPVGDFSYYDHVLDTSFLVGNIPVRAQADGQSKLDTYFKVARGTAKEAAGASCCGGSHAAEMTKWFDTNYHYLVPELNANTHFKLNASKLLTELEQARALTSKVKPVILGPLSYLWLAKITDGSTHKLGFLDDLITVYRELLGTLAKEAVEWVQFDEPILALDLPEQWQHAFERVYHQLQLPNLSVLLATYFGPLDTNLRLAARLPTAALHLDITRGGDDLPRVLDILSPHKILSVGVIDGRNIWKADLNKLLAQLKPVKERLGNGLWLAPSCSLLHTPVDLDSEEALDADIKNWLAFAKQKLQELNILQRALDNGETSVAEALVHNAGAIAARKASAKVNNAKVQSLVNNISPSLSERESPFATRIEKQQAKYNLPTLPTTTIGSFPQTSEIRKNRKAFKSGEISQQQYDRTLRAEIAHAIELQEKIGIDVLVHGEAERNDMVEYFGEQLDGYVFTQFGWVQSYGSRCVKPPIIFGDVSRPRKITVDWAEYAQSLTSKPVKGMLTGPITMLQWSFVRDDQPRKITAQQIALALRSEVNDLEAAGITIIQVDEPALREGLPLRKKDWQNYLDWAVEAFKISTAGVGDTTQIHTHMCYAEFNDIIQAIADLDADVITIETSRSNMELLSAFEQFNYPNDIGPGVYDIHSPNIPATEQVVGLIKKAAENLPLQRLWINPDCGLKTRKWEDVIPALENMVNAAKQLRAEVA</sequence>
<protein>
    <recommendedName>
        <fullName evidence="1">5-methyltetrahydropteroyltriglutamate--homocysteine methyltransferase</fullName>
        <ecNumber evidence="1">2.1.1.14</ecNumber>
    </recommendedName>
    <alternativeName>
        <fullName evidence="1">Cobalamin-independent methionine synthase</fullName>
    </alternativeName>
    <alternativeName>
        <fullName evidence="1">Methionine synthase, vitamin-B12 independent isozyme</fullName>
    </alternativeName>
</protein>
<reference key="1">
    <citation type="journal article" date="2008" name="PLoS Genet.">
        <title>Complete genome sequence of the complex carbohydrate-degrading marine bacterium, Saccharophagus degradans strain 2-40 T.</title>
        <authorList>
            <person name="Weiner R.M."/>
            <person name="Taylor L.E. II"/>
            <person name="Henrissat B."/>
            <person name="Hauser L."/>
            <person name="Land M."/>
            <person name="Coutinho P.M."/>
            <person name="Rancurel C."/>
            <person name="Saunders E.H."/>
            <person name="Longmire A.G."/>
            <person name="Zhang H."/>
            <person name="Bayer E.A."/>
            <person name="Gilbert H.J."/>
            <person name="Larimer F."/>
            <person name="Zhulin I.B."/>
            <person name="Ekborg N.A."/>
            <person name="Lamed R."/>
            <person name="Richardson P.M."/>
            <person name="Borovok I."/>
            <person name="Hutcheson S."/>
        </authorList>
    </citation>
    <scope>NUCLEOTIDE SEQUENCE [LARGE SCALE GENOMIC DNA]</scope>
    <source>
        <strain>2-40 / ATCC 43961 / DSM 17024</strain>
    </source>
</reference>
<evidence type="ECO:0000255" key="1">
    <source>
        <dbReference type="HAMAP-Rule" id="MF_00172"/>
    </source>
</evidence>
<comment type="function">
    <text evidence="1">Catalyzes the transfer of a methyl group from 5-methyltetrahydrofolate to homocysteine resulting in methionine formation.</text>
</comment>
<comment type="catalytic activity">
    <reaction evidence="1">
        <text>5-methyltetrahydropteroyltri-L-glutamate + L-homocysteine = tetrahydropteroyltri-L-glutamate + L-methionine</text>
        <dbReference type="Rhea" id="RHEA:21196"/>
        <dbReference type="ChEBI" id="CHEBI:57844"/>
        <dbReference type="ChEBI" id="CHEBI:58140"/>
        <dbReference type="ChEBI" id="CHEBI:58199"/>
        <dbReference type="ChEBI" id="CHEBI:58207"/>
        <dbReference type="EC" id="2.1.1.14"/>
    </reaction>
</comment>
<comment type="cofactor">
    <cofactor evidence="1">
        <name>Zn(2+)</name>
        <dbReference type="ChEBI" id="CHEBI:29105"/>
    </cofactor>
    <text evidence="1">Binds 1 zinc ion per subunit.</text>
</comment>
<comment type="pathway">
    <text evidence="1">Amino-acid biosynthesis; L-methionine biosynthesis via de novo pathway; L-methionine from L-homocysteine (MetE route): step 1/1.</text>
</comment>
<comment type="similarity">
    <text evidence="1">Belongs to the vitamin-B12 independent methionine synthase family.</text>
</comment>
<organism>
    <name type="scientific">Saccharophagus degradans (strain 2-40 / ATCC 43961 / DSM 17024)</name>
    <dbReference type="NCBI Taxonomy" id="203122"/>
    <lineage>
        <taxon>Bacteria</taxon>
        <taxon>Pseudomonadati</taxon>
        <taxon>Pseudomonadota</taxon>
        <taxon>Gammaproteobacteria</taxon>
        <taxon>Cellvibrionales</taxon>
        <taxon>Cellvibrionaceae</taxon>
        <taxon>Saccharophagus</taxon>
    </lineage>
</organism>